<accession>Q2QSL4</accession>
<accession>A0A0P0Y9N4</accession>
<reference key="1">
    <citation type="journal article" date="2005" name="BMC Biol.">
        <title>The sequence of rice chromosomes 11 and 12, rich in disease resistance genes and recent gene duplications.</title>
        <authorList>
            <consortium name="The rice chromosomes 11 and 12 sequencing consortia"/>
        </authorList>
    </citation>
    <scope>NUCLEOTIDE SEQUENCE [LARGE SCALE GENOMIC DNA]</scope>
    <source>
        <strain>cv. Nipponbare</strain>
    </source>
</reference>
<reference key="2">
    <citation type="journal article" date="2005" name="Nature">
        <title>The map-based sequence of the rice genome.</title>
        <authorList>
            <consortium name="International rice genome sequencing project (IRGSP)"/>
        </authorList>
    </citation>
    <scope>NUCLEOTIDE SEQUENCE [LARGE SCALE GENOMIC DNA]</scope>
    <source>
        <strain>cv. Nipponbare</strain>
    </source>
</reference>
<reference key="3">
    <citation type="journal article" date="2008" name="Nucleic Acids Res.">
        <title>The rice annotation project database (RAP-DB): 2008 update.</title>
        <authorList>
            <consortium name="The rice annotation project (RAP)"/>
        </authorList>
    </citation>
    <scope>GENOME REANNOTATION</scope>
    <source>
        <strain>cv. Nipponbare</strain>
    </source>
</reference>
<reference key="4">
    <citation type="journal article" date="2013" name="Rice">
        <title>Improvement of the Oryza sativa Nipponbare reference genome using next generation sequence and optical map data.</title>
        <authorList>
            <person name="Kawahara Y."/>
            <person name="de la Bastide M."/>
            <person name="Hamilton J.P."/>
            <person name="Kanamori H."/>
            <person name="McCombie W.R."/>
            <person name="Ouyang S."/>
            <person name="Schwartz D.C."/>
            <person name="Tanaka T."/>
            <person name="Wu J."/>
            <person name="Zhou S."/>
            <person name="Childs K.L."/>
            <person name="Davidson R.M."/>
            <person name="Lin H."/>
            <person name="Quesada-Ocampo L."/>
            <person name="Vaillancourt B."/>
            <person name="Sakai H."/>
            <person name="Lee S.S."/>
            <person name="Kim J."/>
            <person name="Numa H."/>
            <person name="Itoh T."/>
            <person name="Buell C.R."/>
            <person name="Matsumoto T."/>
        </authorList>
    </citation>
    <scope>GENOME REANNOTATION</scope>
    <source>
        <strain>cv. Nipponbare</strain>
    </source>
</reference>
<reference key="5">
    <citation type="journal article" date="2007" name="Plant Mol. Biol.">
        <title>Genome-wide identification and expression analysis of rice cell cycle genes.</title>
        <authorList>
            <person name="Guo J."/>
            <person name="Song J."/>
            <person name="Wang F."/>
            <person name="Zhang X.S."/>
        </authorList>
    </citation>
    <scope>GENE FAMILY</scope>
</reference>
<feature type="chain" id="PRO_0000296107" description="Putative cyclin-dependent kinase F-2">
    <location>
        <begin position="1"/>
        <end position="327"/>
    </location>
</feature>
<feature type="domain" description="Protein kinase" evidence="2">
    <location>
        <begin position="4"/>
        <end position="295"/>
    </location>
</feature>
<feature type="active site" description="Proton acceptor" evidence="2 3">
    <location>
        <position position="134"/>
    </location>
</feature>
<feature type="binding site" evidence="2">
    <location>
        <begin position="10"/>
        <end position="18"/>
    </location>
    <ligand>
        <name>ATP</name>
        <dbReference type="ChEBI" id="CHEBI:30616"/>
    </ligand>
</feature>
<feature type="binding site" evidence="2">
    <location>
        <position position="33"/>
    </location>
    <ligand>
        <name>ATP</name>
        <dbReference type="ChEBI" id="CHEBI:30616"/>
    </ligand>
</feature>
<feature type="modified residue" description="Phosphothreonine" evidence="1">
    <location>
        <position position="167"/>
    </location>
</feature>
<organism>
    <name type="scientific">Oryza sativa subsp. japonica</name>
    <name type="common">Rice</name>
    <dbReference type="NCBI Taxonomy" id="39947"/>
    <lineage>
        <taxon>Eukaryota</taxon>
        <taxon>Viridiplantae</taxon>
        <taxon>Streptophyta</taxon>
        <taxon>Embryophyta</taxon>
        <taxon>Tracheophyta</taxon>
        <taxon>Spermatophyta</taxon>
        <taxon>Magnoliopsida</taxon>
        <taxon>Liliopsida</taxon>
        <taxon>Poales</taxon>
        <taxon>Poaceae</taxon>
        <taxon>BOP clade</taxon>
        <taxon>Oryzoideae</taxon>
        <taxon>Oryzeae</taxon>
        <taxon>Oryzinae</taxon>
        <taxon>Oryza</taxon>
        <taxon>Oryza sativa</taxon>
    </lineage>
</organism>
<proteinExistence type="inferred from homology"/>
<name>CDKF2_ORYSJ</name>
<gene>
    <name type="primary">CDKF-2</name>
    <name type="ordered locus">Os12g0424700</name>
    <name type="ordered locus">LOC_Os12g23700</name>
</gene>
<protein>
    <recommendedName>
        <fullName>Putative cyclin-dependent kinase F-2</fullName>
        <shortName>CDKF;2</shortName>
        <ecNumber>2.7.11.22</ecNumber>
        <ecNumber>2.7.11.23</ecNumber>
    </recommendedName>
</protein>
<dbReference type="EC" id="2.7.11.22"/>
<dbReference type="EC" id="2.7.11.23"/>
<dbReference type="EMBL" id="DP000011">
    <property type="protein sequence ID" value="ABA97935.1"/>
    <property type="molecule type" value="Genomic_DNA"/>
</dbReference>
<dbReference type="EMBL" id="AP008218">
    <property type="protein sequence ID" value="BAF29682.1"/>
    <property type="molecule type" value="Genomic_DNA"/>
</dbReference>
<dbReference type="EMBL" id="AP014968">
    <property type="protein sequence ID" value="BAT16911.1"/>
    <property type="molecule type" value="Genomic_DNA"/>
</dbReference>
<dbReference type="RefSeq" id="XP_015619021.1">
    <property type="nucleotide sequence ID" value="XM_015763535.1"/>
</dbReference>
<dbReference type="SMR" id="Q2QSL4"/>
<dbReference type="FunCoup" id="Q2QSL4">
    <property type="interactions" value="84"/>
</dbReference>
<dbReference type="STRING" id="39947.Q2QSL4"/>
<dbReference type="PaxDb" id="39947-Q2QSL4"/>
<dbReference type="EnsemblPlants" id="Os12t0424700-00">
    <property type="protein sequence ID" value="Os12t0424700-00"/>
    <property type="gene ID" value="Os12g0424700"/>
</dbReference>
<dbReference type="Gramene" id="Os12t0424700-00">
    <property type="protein sequence ID" value="Os12t0424700-00"/>
    <property type="gene ID" value="Os12g0424700"/>
</dbReference>
<dbReference type="KEGG" id="dosa:Os12g0424700"/>
<dbReference type="eggNOG" id="KOG0663">
    <property type="taxonomic scope" value="Eukaryota"/>
</dbReference>
<dbReference type="HOGENOM" id="CLU_000288_181_1_1"/>
<dbReference type="InParanoid" id="Q2QSL4"/>
<dbReference type="OMA" id="CAWFTEA"/>
<dbReference type="OrthoDB" id="648396at2759"/>
<dbReference type="Proteomes" id="UP000000763">
    <property type="component" value="Chromosome 12"/>
</dbReference>
<dbReference type="Proteomes" id="UP000059680">
    <property type="component" value="Chromosome 12"/>
</dbReference>
<dbReference type="GO" id="GO:0005634">
    <property type="term" value="C:nucleus"/>
    <property type="evidence" value="ECO:0000318"/>
    <property type="project" value="GO_Central"/>
</dbReference>
<dbReference type="GO" id="GO:0005524">
    <property type="term" value="F:ATP binding"/>
    <property type="evidence" value="ECO:0007669"/>
    <property type="project" value="UniProtKB-KW"/>
</dbReference>
<dbReference type="GO" id="GO:0004693">
    <property type="term" value="F:cyclin-dependent protein serine/threonine kinase activity"/>
    <property type="evidence" value="ECO:0007669"/>
    <property type="project" value="UniProtKB-EC"/>
</dbReference>
<dbReference type="GO" id="GO:0106310">
    <property type="term" value="F:protein serine kinase activity"/>
    <property type="evidence" value="ECO:0007669"/>
    <property type="project" value="RHEA"/>
</dbReference>
<dbReference type="GO" id="GO:0004674">
    <property type="term" value="F:protein serine/threonine kinase activity"/>
    <property type="evidence" value="ECO:0000318"/>
    <property type="project" value="GO_Central"/>
</dbReference>
<dbReference type="GO" id="GO:0008353">
    <property type="term" value="F:RNA polymerase II CTD heptapeptide repeat kinase activity"/>
    <property type="evidence" value="ECO:0007669"/>
    <property type="project" value="UniProtKB-EC"/>
</dbReference>
<dbReference type="CDD" id="cd07832">
    <property type="entry name" value="STKc_CCRK"/>
    <property type="match status" value="1"/>
</dbReference>
<dbReference type="FunFam" id="1.10.510.10:FF:000729">
    <property type="entry name" value="Putative cyclin-dependent kinase F-2"/>
    <property type="match status" value="1"/>
</dbReference>
<dbReference type="FunFam" id="3.30.200.20:FF:000888">
    <property type="entry name" value="Putative cyclin-dependent kinase F-2"/>
    <property type="match status" value="1"/>
</dbReference>
<dbReference type="Gene3D" id="3.30.200.20">
    <property type="entry name" value="Phosphorylase Kinase, domain 1"/>
    <property type="match status" value="1"/>
</dbReference>
<dbReference type="Gene3D" id="1.10.510.10">
    <property type="entry name" value="Transferase(Phosphotransferase) domain 1"/>
    <property type="match status" value="1"/>
</dbReference>
<dbReference type="InterPro" id="IPR050108">
    <property type="entry name" value="CDK"/>
</dbReference>
<dbReference type="InterPro" id="IPR048002">
    <property type="entry name" value="CDK20-like_STKc"/>
</dbReference>
<dbReference type="InterPro" id="IPR011009">
    <property type="entry name" value="Kinase-like_dom_sf"/>
</dbReference>
<dbReference type="InterPro" id="IPR000719">
    <property type="entry name" value="Prot_kinase_dom"/>
</dbReference>
<dbReference type="InterPro" id="IPR008271">
    <property type="entry name" value="Ser/Thr_kinase_AS"/>
</dbReference>
<dbReference type="PANTHER" id="PTHR24056">
    <property type="entry name" value="CELL DIVISION PROTEIN KINASE"/>
    <property type="match status" value="1"/>
</dbReference>
<dbReference type="PANTHER" id="PTHR24056:SF578">
    <property type="entry name" value="CYCLIN-DEPENDENT KINASE F-2-RELATED"/>
    <property type="match status" value="1"/>
</dbReference>
<dbReference type="Pfam" id="PF00069">
    <property type="entry name" value="Pkinase"/>
    <property type="match status" value="1"/>
</dbReference>
<dbReference type="SMART" id="SM00220">
    <property type="entry name" value="S_TKc"/>
    <property type="match status" value="1"/>
</dbReference>
<dbReference type="SUPFAM" id="SSF56112">
    <property type="entry name" value="Protein kinase-like (PK-like)"/>
    <property type="match status" value="1"/>
</dbReference>
<dbReference type="PROSITE" id="PS50011">
    <property type="entry name" value="PROTEIN_KINASE_DOM"/>
    <property type="match status" value="1"/>
</dbReference>
<dbReference type="PROSITE" id="PS00108">
    <property type="entry name" value="PROTEIN_KINASE_ST"/>
    <property type="match status" value="1"/>
</dbReference>
<comment type="catalytic activity">
    <reaction>
        <text>L-seryl-[protein] + ATP = O-phospho-L-seryl-[protein] + ADP + H(+)</text>
        <dbReference type="Rhea" id="RHEA:17989"/>
        <dbReference type="Rhea" id="RHEA-COMP:9863"/>
        <dbReference type="Rhea" id="RHEA-COMP:11604"/>
        <dbReference type="ChEBI" id="CHEBI:15378"/>
        <dbReference type="ChEBI" id="CHEBI:29999"/>
        <dbReference type="ChEBI" id="CHEBI:30616"/>
        <dbReference type="ChEBI" id="CHEBI:83421"/>
        <dbReference type="ChEBI" id="CHEBI:456216"/>
        <dbReference type="EC" id="2.7.11.22"/>
    </reaction>
</comment>
<comment type="catalytic activity">
    <reaction>
        <text>L-threonyl-[protein] + ATP = O-phospho-L-threonyl-[protein] + ADP + H(+)</text>
        <dbReference type="Rhea" id="RHEA:46608"/>
        <dbReference type="Rhea" id="RHEA-COMP:11060"/>
        <dbReference type="Rhea" id="RHEA-COMP:11605"/>
        <dbReference type="ChEBI" id="CHEBI:15378"/>
        <dbReference type="ChEBI" id="CHEBI:30013"/>
        <dbReference type="ChEBI" id="CHEBI:30616"/>
        <dbReference type="ChEBI" id="CHEBI:61977"/>
        <dbReference type="ChEBI" id="CHEBI:456216"/>
        <dbReference type="EC" id="2.7.11.22"/>
    </reaction>
</comment>
<comment type="catalytic activity">
    <reaction>
        <text>[DNA-directed RNA polymerase] + ATP = phospho-[DNA-directed RNA polymerase] + ADP + H(+)</text>
        <dbReference type="Rhea" id="RHEA:10216"/>
        <dbReference type="Rhea" id="RHEA-COMP:11321"/>
        <dbReference type="Rhea" id="RHEA-COMP:11322"/>
        <dbReference type="ChEBI" id="CHEBI:15378"/>
        <dbReference type="ChEBI" id="CHEBI:30616"/>
        <dbReference type="ChEBI" id="CHEBI:43176"/>
        <dbReference type="ChEBI" id="CHEBI:68546"/>
        <dbReference type="ChEBI" id="CHEBI:456216"/>
        <dbReference type="EC" id="2.7.11.23"/>
    </reaction>
</comment>
<comment type="similarity">
    <text evidence="4">Belongs to the protein kinase superfamily. CMGC Ser/Thr protein kinase family. CDC2/CDKX subfamily.</text>
</comment>
<keyword id="KW-0067">ATP-binding</keyword>
<keyword id="KW-0418">Kinase</keyword>
<keyword id="KW-0547">Nucleotide-binding</keyword>
<keyword id="KW-0597">Phosphoprotein</keyword>
<keyword id="KW-1185">Reference proteome</keyword>
<keyword id="KW-0723">Serine/threonine-protein kinase</keyword>
<keyword id="KW-0808">Transferase</keyword>
<sequence>MERYECLGKIGEGAAGVVHVARDRTTGETVAVKRLHGGIGCGEEEWLREARCLQACRGHPHLVELRAAHREMRRGGGGACCYVVMEYVDGPSLSRVVREERRGRPFPEAEARRLMRQLLDGVAAMHAAGVMHRDLKPDNVVVGPRGDLKICDFGMSRVTAAGAPPYTSPVVTLWYRAPELILGSQEYDSLVDTWSLGCIMAELLAGAPLFPGRSEMDQLNRVFDTVGMQDMKSWPGFARLPRAESALCSRARPPSRLREMFPKLSAAGFDVLSGLLACRPDRRLTAADALRCAWFTEADTPPDATPVTCGSARFTPCVSGVADAIVV</sequence>
<evidence type="ECO:0000250" key="1"/>
<evidence type="ECO:0000255" key="2">
    <source>
        <dbReference type="PROSITE-ProRule" id="PRU00159"/>
    </source>
</evidence>
<evidence type="ECO:0000255" key="3">
    <source>
        <dbReference type="PROSITE-ProRule" id="PRU10027"/>
    </source>
</evidence>
<evidence type="ECO:0000305" key="4"/>